<dbReference type="EMBL" id="CR382129">
    <property type="protein sequence ID" value="CAG82294.1"/>
    <property type="molecule type" value="Genomic_DNA"/>
</dbReference>
<dbReference type="RefSeq" id="XP_501974.1">
    <property type="nucleotide sequence ID" value="XM_501974.1"/>
</dbReference>
<dbReference type="SMR" id="Q6CBI8"/>
<dbReference type="FunCoup" id="Q6CBI8">
    <property type="interactions" value="73"/>
</dbReference>
<dbReference type="STRING" id="284591.Q6CBI8"/>
<dbReference type="EnsemblFungi" id="CAG82294">
    <property type="protein sequence ID" value="CAG82294"/>
    <property type="gene ID" value="YALI0_C18381g"/>
</dbReference>
<dbReference type="KEGG" id="yli:2909977"/>
<dbReference type="VEuPathDB" id="FungiDB:YALI0_C18381g"/>
<dbReference type="HOGENOM" id="CLU_000288_57_8_1"/>
<dbReference type="InParanoid" id="Q6CBI8"/>
<dbReference type="OMA" id="IREIRWS"/>
<dbReference type="OrthoDB" id="61494at4891"/>
<dbReference type="Proteomes" id="UP000001300">
    <property type="component" value="Chromosome C"/>
</dbReference>
<dbReference type="GO" id="GO:0097361">
    <property type="term" value="C:cytosolic [4Fe-4S] assembly targeting complex"/>
    <property type="evidence" value="ECO:0000318"/>
    <property type="project" value="GO_Central"/>
</dbReference>
<dbReference type="GO" id="GO:0005634">
    <property type="term" value="C:nucleus"/>
    <property type="evidence" value="ECO:0007669"/>
    <property type="project" value="UniProtKB-SubCell"/>
</dbReference>
<dbReference type="GO" id="GO:0016226">
    <property type="term" value="P:iron-sulfur cluster assembly"/>
    <property type="evidence" value="ECO:0000318"/>
    <property type="project" value="GO_Central"/>
</dbReference>
<dbReference type="CDD" id="cd00200">
    <property type="entry name" value="WD40"/>
    <property type="match status" value="1"/>
</dbReference>
<dbReference type="FunFam" id="2.130.10.10:FF:000705">
    <property type="entry name" value="Probable cytosolic iron-sulfur protein assembly protein 1"/>
    <property type="match status" value="1"/>
</dbReference>
<dbReference type="Gene3D" id="2.130.10.10">
    <property type="entry name" value="YVTN repeat-like/Quinoprotein amine dehydrogenase"/>
    <property type="match status" value="1"/>
</dbReference>
<dbReference type="HAMAP" id="MF_03037">
    <property type="entry name" value="ciao1"/>
    <property type="match status" value="1"/>
</dbReference>
<dbReference type="InterPro" id="IPR028608">
    <property type="entry name" value="CIAO1/Cia1"/>
</dbReference>
<dbReference type="InterPro" id="IPR020472">
    <property type="entry name" value="G-protein_beta_WD-40_rep"/>
</dbReference>
<dbReference type="InterPro" id="IPR015943">
    <property type="entry name" value="WD40/YVTN_repeat-like_dom_sf"/>
</dbReference>
<dbReference type="InterPro" id="IPR019775">
    <property type="entry name" value="WD40_repeat_CS"/>
</dbReference>
<dbReference type="InterPro" id="IPR036322">
    <property type="entry name" value="WD40_repeat_dom_sf"/>
</dbReference>
<dbReference type="InterPro" id="IPR001680">
    <property type="entry name" value="WD40_rpt"/>
</dbReference>
<dbReference type="PANTHER" id="PTHR19920:SF0">
    <property type="entry name" value="CYTOSOLIC IRON-SULFUR PROTEIN ASSEMBLY PROTEIN CIAO1-RELATED"/>
    <property type="match status" value="1"/>
</dbReference>
<dbReference type="PANTHER" id="PTHR19920">
    <property type="entry name" value="WD40 PROTEIN CIAO1"/>
    <property type="match status" value="1"/>
</dbReference>
<dbReference type="Pfam" id="PF00400">
    <property type="entry name" value="WD40"/>
    <property type="match status" value="6"/>
</dbReference>
<dbReference type="PRINTS" id="PR00320">
    <property type="entry name" value="GPROTEINBRPT"/>
</dbReference>
<dbReference type="SMART" id="SM00320">
    <property type="entry name" value="WD40"/>
    <property type="match status" value="7"/>
</dbReference>
<dbReference type="SUPFAM" id="SSF50978">
    <property type="entry name" value="WD40 repeat-like"/>
    <property type="match status" value="1"/>
</dbReference>
<dbReference type="PROSITE" id="PS00678">
    <property type="entry name" value="WD_REPEATS_1"/>
    <property type="match status" value="2"/>
</dbReference>
<dbReference type="PROSITE" id="PS50082">
    <property type="entry name" value="WD_REPEATS_2"/>
    <property type="match status" value="5"/>
</dbReference>
<dbReference type="PROSITE" id="PS50294">
    <property type="entry name" value="WD_REPEATS_REGION"/>
    <property type="match status" value="1"/>
</dbReference>
<protein>
    <recommendedName>
        <fullName evidence="1">Probable cytosolic iron-sulfur protein assembly protein 1</fullName>
    </recommendedName>
</protein>
<gene>
    <name evidence="1" type="primary">CIA1</name>
    <name type="ordered locus">YALI0C18381g</name>
</gene>
<keyword id="KW-0963">Cytoplasm</keyword>
<keyword id="KW-0539">Nucleus</keyword>
<keyword id="KW-1185">Reference proteome</keyword>
<keyword id="KW-0677">Repeat</keyword>
<keyword id="KW-0853">WD repeat</keyword>
<evidence type="ECO:0000255" key="1">
    <source>
        <dbReference type="HAMAP-Rule" id="MF_03037"/>
    </source>
</evidence>
<comment type="function">
    <text evidence="1">Essential component of the cytosolic iron-sulfur (Fe/S) protein assembly machinery. Required for the maturation of extramitochondrial Fe/S proteins.</text>
</comment>
<comment type="subunit">
    <text evidence="1">Interacts with NAR1.</text>
</comment>
<comment type="subcellular location">
    <subcellularLocation>
        <location evidence="1">Cytoplasm</location>
    </subcellularLocation>
    <subcellularLocation>
        <location evidence="1">Nucleus</location>
    </subcellularLocation>
    <text evidence="1">Preferentially localized to the nucleus.</text>
</comment>
<comment type="similarity">
    <text evidence="1">Belongs to the WD repeat CIA1 family.</text>
</comment>
<accession>Q6CBI8</accession>
<sequence length="332" mass="36806">MQLIKALKGHTDRAWAASVHPNLPLLATCSGDKTVRIYNTNNWELVTTITEGHNRSVRSVAWKPSGSSPSLALGSFDSTVSIWGKEDDEWQFLAAIEGHENEVKGVSWSCDGQLLATCSRDKSIWVWEADDMNDEFECISVLQDHTQDVKHVAWHPSEMVFASASYDDTVRLWREDDDDWICVADLGGHESTVWGCAFEPSEGSDLRLVSCSDDKTCIVWKKEGQVGGTGDHSGIRPAFRADPLSEEWIQQATLPEAHTRAIYSVAWNKNGRIASTGADGKLVVYKENGPGQWVVESEVENAHGVYEVNDVVWLDDKLVTSGDDGVVNIWEV</sequence>
<name>CIAO1_YARLI</name>
<organism>
    <name type="scientific">Yarrowia lipolytica (strain CLIB 122 / E 150)</name>
    <name type="common">Yeast</name>
    <name type="synonym">Candida lipolytica</name>
    <dbReference type="NCBI Taxonomy" id="284591"/>
    <lineage>
        <taxon>Eukaryota</taxon>
        <taxon>Fungi</taxon>
        <taxon>Dikarya</taxon>
        <taxon>Ascomycota</taxon>
        <taxon>Saccharomycotina</taxon>
        <taxon>Dipodascomycetes</taxon>
        <taxon>Dipodascales</taxon>
        <taxon>Dipodascales incertae sedis</taxon>
        <taxon>Yarrowia</taxon>
    </lineage>
</organism>
<proteinExistence type="inferred from homology"/>
<reference key="1">
    <citation type="journal article" date="2004" name="Nature">
        <title>Genome evolution in yeasts.</title>
        <authorList>
            <person name="Dujon B."/>
            <person name="Sherman D."/>
            <person name="Fischer G."/>
            <person name="Durrens P."/>
            <person name="Casaregola S."/>
            <person name="Lafontaine I."/>
            <person name="de Montigny J."/>
            <person name="Marck C."/>
            <person name="Neuveglise C."/>
            <person name="Talla E."/>
            <person name="Goffard N."/>
            <person name="Frangeul L."/>
            <person name="Aigle M."/>
            <person name="Anthouard V."/>
            <person name="Babour A."/>
            <person name="Barbe V."/>
            <person name="Barnay S."/>
            <person name="Blanchin S."/>
            <person name="Beckerich J.-M."/>
            <person name="Beyne E."/>
            <person name="Bleykasten C."/>
            <person name="Boisrame A."/>
            <person name="Boyer J."/>
            <person name="Cattolico L."/>
            <person name="Confanioleri F."/>
            <person name="de Daruvar A."/>
            <person name="Despons L."/>
            <person name="Fabre E."/>
            <person name="Fairhead C."/>
            <person name="Ferry-Dumazet H."/>
            <person name="Groppi A."/>
            <person name="Hantraye F."/>
            <person name="Hennequin C."/>
            <person name="Jauniaux N."/>
            <person name="Joyet P."/>
            <person name="Kachouri R."/>
            <person name="Kerrest A."/>
            <person name="Koszul R."/>
            <person name="Lemaire M."/>
            <person name="Lesur I."/>
            <person name="Ma L."/>
            <person name="Muller H."/>
            <person name="Nicaud J.-M."/>
            <person name="Nikolski M."/>
            <person name="Oztas S."/>
            <person name="Ozier-Kalogeropoulos O."/>
            <person name="Pellenz S."/>
            <person name="Potier S."/>
            <person name="Richard G.-F."/>
            <person name="Straub M.-L."/>
            <person name="Suleau A."/>
            <person name="Swennen D."/>
            <person name="Tekaia F."/>
            <person name="Wesolowski-Louvel M."/>
            <person name="Westhof E."/>
            <person name="Wirth B."/>
            <person name="Zeniou-Meyer M."/>
            <person name="Zivanovic Y."/>
            <person name="Bolotin-Fukuhara M."/>
            <person name="Thierry A."/>
            <person name="Bouchier C."/>
            <person name="Caudron B."/>
            <person name="Scarpelli C."/>
            <person name="Gaillardin C."/>
            <person name="Weissenbach J."/>
            <person name="Wincker P."/>
            <person name="Souciet J.-L."/>
        </authorList>
    </citation>
    <scope>NUCLEOTIDE SEQUENCE [LARGE SCALE GENOMIC DNA]</scope>
    <source>
        <strain>CLIB 122 / E 150</strain>
    </source>
</reference>
<feature type="chain" id="PRO_0000382529" description="Probable cytosolic iron-sulfur protein assembly protein 1">
    <location>
        <begin position="1"/>
        <end position="332"/>
    </location>
</feature>
<feature type="repeat" description="WD 1">
    <location>
        <begin position="9"/>
        <end position="48"/>
    </location>
</feature>
<feature type="repeat" description="WD 2">
    <location>
        <begin position="52"/>
        <end position="93"/>
    </location>
</feature>
<feature type="repeat" description="WD 3">
    <location>
        <begin position="98"/>
        <end position="137"/>
    </location>
</feature>
<feature type="repeat" description="WD 4">
    <location>
        <begin position="144"/>
        <end position="183"/>
    </location>
</feature>
<feature type="repeat" description="WD 5">
    <location>
        <begin position="188"/>
        <end position="230"/>
    </location>
</feature>
<feature type="repeat" description="WD 6">
    <location>
        <begin position="257"/>
        <end position="295"/>
    </location>
</feature>
<feature type="repeat" description="WD 7">
    <location>
        <begin position="302"/>
        <end position="332"/>
    </location>
</feature>